<dbReference type="EMBL" id="AF155119">
    <property type="protein sequence ID" value="AAF26216.1"/>
    <property type="molecule type" value="mRNA"/>
</dbReference>
<dbReference type="RefSeq" id="NP_001075530.1">
    <property type="nucleotide sequence ID" value="NM_001082061.1"/>
</dbReference>
<dbReference type="SMR" id="Q9N1R6"/>
<dbReference type="FunCoup" id="Q9N1R6">
    <property type="interactions" value="26"/>
</dbReference>
<dbReference type="STRING" id="9986.ENSOCUP00000028774"/>
<dbReference type="PaxDb" id="9986-ENSOCUP00000004768"/>
<dbReference type="GeneID" id="100008729"/>
<dbReference type="KEGG" id="ocu:100008729"/>
<dbReference type="CTD" id="11136"/>
<dbReference type="eggNOG" id="KOG1287">
    <property type="taxonomic scope" value="Eukaryota"/>
</dbReference>
<dbReference type="InParanoid" id="Q9N1R6"/>
<dbReference type="OrthoDB" id="5982228at2759"/>
<dbReference type="Proteomes" id="UP000001811">
    <property type="component" value="Unplaced"/>
</dbReference>
<dbReference type="GO" id="GO:0016324">
    <property type="term" value="C:apical plasma membrane"/>
    <property type="evidence" value="ECO:0000250"/>
    <property type="project" value="UniProtKB"/>
</dbReference>
<dbReference type="GO" id="GO:0031526">
    <property type="term" value="C:brush border membrane"/>
    <property type="evidence" value="ECO:0000250"/>
    <property type="project" value="UniProtKB"/>
</dbReference>
<dbReference type="GO" id="GO:0016020">
    <property type="term" value="C:membrane"/>
    <property type="evidence" value="ECO:0000305"/>
    <property type="project" value="UniProtKB"/>
</dbReference>
<dbReference type="GO" id="GO:0005886">
    <property type="term" value="C:plasma membrane"/>
    <property type="evidence" value="ECO:0000250"/>
    <property type="project" value="UniProtKB"/>
</dbReference>
<dbReference type="GO" id="GO:0180009">
    <property type="term" value="F:broad specificity neutral L-amino acid:basic L-amino acid antiporter activity"/>
    <property type="evidence" value="ECO:0000250"/>
    <property type="project" value="UniProtKB"/>
</dbReference>
<dbReference type="GO" id="GO:0015184">
    <property type="term" value="F:L-cystine transmembrane transporter activity"/>
    <property type="evidence" value="ECO:0000250"/>
    <property type="project" value="UniProtKB"/>
</dbReference>
<dbReference type="GO" id="GO:0015175">
    <property type="term" value="F:neutral L-amino acid transmembrane transporter activity"/>
    <property type="evidence" value="ECO:0000314"/>
    <property type="project" value="UniProtKB"/>
</dbReference>
<dbReference type="GO" id="GO:0042605">
    <property type="term" value="F:peptide antigen binding"/>
    <property type="evidence" value="ECO:0000353"/>
    <property type="project" value="UniProtKB"/>
</dbReference>
<dbReference type="GO" id="GO:0015811">
    <property type="term" value="P:L-cystine transport"/>
    <property type="evidence" value="ECO:0000250"/>
    <property type="project" value="UniProtKB"/>
</dbReference>
<dbReference type="GO" id="GO:0015804">
    <property type="term" value="P:neutral amino acid transport"/>
    <property type="evidence" value="ECO:0000314"/>
    <property type="project" value="UniProtKB"/>
</dbReference>
<dbReference type="FunFam" id="1.20.1740.10:FF:000015">
    <property type="entry name" value="B(0,+)-type amino acid transporter 1"/>
    <property type="match status" value="1"/>
</dbReference>
<dbReference type="Gene3D" id="1.20.1740.10">
    <property type="entry name" value="Amino acid/polyamine transporter I"/>
    <property type="match status" value="1"/>
</dbReference>
<dbReference type="InterPro" id="IPR002293">
    <property type="entry name" value="AA/rel_permease1"/>
</dbReference>
<dbReference type="InterPro" id="IPR050598">
    <property type="entry name" value="AminoAcid_Transporter"/>
</dbReference>
<dbReference type="PANTHER" id="PTHR11785">
    <property type="entry name" value="AMINO ACID TRANSPORTER"/>
    <property type="match status" value="1"/>
</dbReference>
<dbReference type="PANTHER" id="PTHR11785:SF354">
    <property type="entry name" value="B(0,+)-TYPE AMINO ACID TRANSPORTER 1"/>
    <property type="match status" value="1"/>
</dbReference>
<dbReference type="Pfam" id="PF13520">
    <property type="entry name" value="AA_permease_2"/>
    <property type="match status" value="1"/>
</dbReference>
<dbReference type="PIRSF" id="PIRSF006060">
    <property type="entry name" value="AA_transporter"/>
    <property type="match status" value="1"/>
</dbReference>
<name>BAT1_RABIT</name>
<keyword id="KW-0029">Amino-acid transport</keyword>
<keyword id="KW-1003">Cell membrane</keyword>
<keyword id="KW-1015">Disulfide bond</keyword>
<keyword id="KW-0472">Membrane</keyword>
<keyword id="KW-0597">Phosphoprotein</keyword>
<keyword id="KW-1185">Reference proteome</keyword>
<keyword id="KW-0812">Transmembrane</keyword>
<keyword id="KW-1133">Transmembrane helix</keyword>
<keyword id="KW-0813">Transport</keyword>
<reference key="1">
    <citation type="journal article" date="1999" name="J. Biol. Chem.">
        <title>Cloning and expression of a b(0,+)-like amino acid transporter functioning as a heterodimer with 4F2hc instead of rBAT. A new candidate gene for cystinuria.</title>
        <authorList>
            <person name="Rajan D.P."/>
            <person name="Kekuda R."/>
            <person name="Huang W."/>
            <person name="Wang H."/>
            <person name="Devoe L.D."/>
            <person name="Leibach F.H."/>
            <person name="Prasad P.D."/>
            <person name="Ganapathy V."/>
        </authorList>
    </citation>
    <scope>NUCLEOTIDE SEQUENCE [MRNA]</scope>
    <scope>TISSUE SPECIFICITY</scope>
    <scope>CAUTION</scope>
    <source>
        <tissue>Intestine</tissue>
    </source>
</reference>
<comment type="function">
    <text evidence="1">Mediates the electrogenic exchange between cationic amino acids and neutral amino acids, with a stoichiometry of 1:1 (By similarity). Has system b(0,+)-like activity with high affinity for extracellular cationic amino acids and L-cystine and lower affinity for intracellular neutral amino acids (By similarity). Substrate exchange is driven by high concentration of intracellular neutral amino acids and the intracellular reduction of L-cystine to L-cysteine (By similarity). Required for reabsorption of L-cystine and dibasic amino acids across the brush border membrane in renal proximal tubules (By similarity).</text>
</comment>
<comment type="catalytic activity">
    <reaction evidence="1">
        <text>L-leucine(out) + L-arginine(in) = L-leucine(in) + L-arginine(out)</text>
        <dbReference type="Rhea" id="RHEA:71059"/>
        <dbReference type="ChEBI" id="CHEBI:32682"/>
        <dbReference type="ChEBI" id="CHEBI:57427"/>
    </reaction>
    <physiologicalReaction direction="left-to-right" evidence="1">
        <dbReference type="Rhea" id="RHEA:71060"/>
    </physiologicalReaction>
</comment>
<comment type="catalytic activity">
    <reaction evidence="1">
        <text>L-histidine(out) + L-arginine(in) = L-histidine(in) + L-arginine(out)</text>
        <dbReference type="Rhea" id="RHEA:71063"/>
        <dbReference type="ChEBI" id="CHEBI:32682"/>
        <dbReference type="ChEBI" id="CHEBI:57595"/>
    </reaction>
    <physiologicalReaction direction="left-to-right" evidence="1">
        <dbReference type="Rhea" id="RHEA:71064"/>
    </physiologicalReaction>
</comment>
<comment type="catalytic activity">
    <reaction evidence="1">
        <text>L-arginine(in) + L-phenylalanine(out) = L-arginine(out) + L-phenylalanine(in)</text>
        <dbReference type="Rhea" id="RHEA:71067"/>
        <dbReference type="ChEBI" id="CHEBI:32682"/>
        <dbReference type="ChEBI" id="CHEBI:58095"/>
    </reaction>
    <physiologicalReaction direction="left-to-right" evidence="1">
        <dbReference type="Rhea" id="RHEA:71068"/>
    </physiologicalReaction>
</comment>
<comment type="catalytic activity">
    <reaction evidence="1">
        <text>L-cysteine(out) + L-arginine(in) = L-cysteine(in) + L-arginine(out)</text>
        <dbReference type="Rhea" id="RHEA:71071"/>
        <dbReference type="ChEBI" id="CHEBI:32682"/>
        <dbReference type="ChEBI" id="CHEBI:35235"/>
    </reaction>
    <physiologicalReaction direction="left-to-right" evidence="1">
        <dbReference type="Rhea" id="RHEA:71072"/>
    </physiologicalReaction>
</comment>
<comment type="catalytic activity">
    <reaction evidence="1">
        <text>L-cystine(out) + L-arginine(in) = L-cystine(in) + L-arginine(out)</text>
        <dbReference type="Rhea" id="RHEA:71075"/>
        <dbReference type="ChEBI" id="CHEBI:32682"/>
        <dbReference type="ChEBI" id="CHEBI:35491"/>
    </reaction>
    <physiologicalReaction direction="left-to-right" evidence="1">
        <dbReference type="Rhea" id="RHEA:71076"/>
    </physiologicalReaction>
</comment>
<comment type="catalytic activity">
    <reaction evidence="1">
        <text>L-lysine(out) + L-arginine(in) = L-lysine(in) + L-arginine(out)</text>
        <dbReference type="Rhea" id="RHEA:70827"/>
        <dbReference type="ChEBI" id="CHEBI:32551"/>
        <dbReference type="ChEBI" id="CHEBI:32682"/>
    </reaction>
    <physiologicalReaction direction="left-to-right" evidence="1">
        <dbReference type="Rhea" id="RHEA:70828"/>
    </physiologicalReaction>
</comment>
<comment type="subunit">
    <text evidence="1 2">Disulfide-linked heterodimer composed of the catalytic light chain subunit SLC7A9 and the heavy chain subunit. The heterodimer is the minimal functional unit. Assembles in heterotetramers (dimers of heterodimers) and higher order oligomers (By similarity). Interacts with CAV1 (By similarity).</text>
</comment>
<comment type="subcellular location">
    <subcellularLocation>
        <location evidence="1">Apical cell membrane</location>
        <topology evidence="1">Multi-pass membrane protein</topology>
    </subcellularLocation>
</comment>
<comment type="tissue specificity">
    <text evidence="5">Kidney and small intestine.</text>
</comment>
<comment type="similarity">
    <text evidence="3">Belongs to the amino acid-polyamine-organocation (APC) superfamily.</text>
</comment>
<comment type="caution">
    <text evidence="5">Suggested but not proven to function in complex with SLC3A2 rather than with SLC3A1.</text>
</comment>
<accession>Q9N1R6</accession>
<evidence type="ECO:0000250" key="1">
    <source>
        <dbReference type="UniProtKB" id="P82251"/>
    </source>
</evidence>
<evidence type="ECO:0000250" key="2">
    <source>
        <dbReference type="UniProtKB" id="P82252"/>
    </source>
</evidence>
<evidence type="ECO:0000255" key="3"/>
<evidence type="ECO:0000256" key="4">
    <source>
        <dbReference type="SAM" id="MobiDB-lite"/>
    </source>
</evidence>
<evidence type="ECO:0000269" key="5">
    <source>
    </source>
</evidence>
<evidence type="ECO:0000305" key="6"/>
<sequence length="487" mass="53611">MGETVPRRRREDEKSIQSDEPKTTSLQKEVGLISGICIIVGTIIGSGIFISPKSVLSNTQAVGPCLIIWAACGVLGTLGALCFAELGTMITKSGGEYPYLMEAFGPIPAYLFSWSSLLVMKPSSFAIICLSFSEYVATPFYSGCEPPKVVVKCLAAAAIMLITTVNSLSVRLGSYVQNFFTAAKLVIVAIIIISGLVLLAQGNTKNFENSFEGAEVSVGAISLALYNGLWAYDGWNQLNYITEELRNPFRNLPLAIIFGIPLVTVCYILINISYFTVMTPTELLQSQAVAVTFGDRVLYPASWIVPVFVAFSTIGAANGTCFTAGRLVYVAGREGHMLKVLSYISVRRLTPAPAIIFYGIVATIYIIPGDINSLVNYFSFATWLFYGLTILGLIVMRFTRKELERPIKVPIFIPILVTFIAAFLVLAPVITNPAWEYLYCVLFILSGLVFYFLFVYYKFEWAQKISKPITMHLQMLMEVVPPEPDPK</sequence>
<proteinExistence type="evidence at transcript level"/>
<protein>
    <recommendedName>
        <fullName>b(0,+)-type amino acid transporter 1</fullName>
        <shortName>b(0,+)AT</shortName>
    </recommendedName>
    <alternativeName>
        <fullName>4F2-LC6</fullName>
    </alternativeName>
    <alternativeName>
        <fullName>Glycoprotein-associated amino acid transporter b0,+AT1</fullName>
    </alternativeName>
    <alternativeName>
        <fullName>Solute carrier family 7 member 9</fullName>
    </alternativeName>
</protein>
<feature type="chain" id="PRO_0000252232" description="b(0,+)-type amino acid transporter 1">
    <location>
        <begin position="1"/>
        <end position="487"/>
    </location>
</feature>
<feature type="topological domain" description="Cytoplasmic" evidence="6">
    <location>
        <begin position="1"/>
        <end position="31"/>
    </location>
</feature>
<feature type="transmembrane region" description="Helical" evidence="1">
    <location>
        <begin position="32"/>
        <end position="55"/>
    </location>
</feature>
<feature type="topological domain" description="Extracellular" evidence="6">
    <location>
        <begin position="56"/>
        <end position="62"/>
    </location>
</feature>
<feature type="transmembrane region" description="Helical" evidence="1">
    <location>
        <begin position="63"/>
        <end position="84"/>
    </location>
</feature>
<feature type="topological domain" description="Cytoplasmic" evidence="6">
    <location>
        <begin position="85"/>
        <end position="110"/>
    </location>
</feature>
<feature type="transmembrane region" description="Helical" evidence="1">
    <location>
        <begin position="111"/>
        <end position="137"/>
    </location>
</feature>
<feature type="topological domain" description="Extracellular" evidence="6">
    <location>
        <begin position="138"/>
        <end position="147"/>
    </location>
</feature>
<feature type="transmembrane region" description="Helical" evidence="1">
    <location>
        <begin position="148"/>
        <end position="169"/>
    </location>
</feature>
<feature type="transmembrane region" description="Helical" evidence="1">
    <location>
        <begin position="170"/>
        <end position="193"/>
    </location>
</feature>
<feature type="topological domain" description="Extracellular" evidence="6">
    <location>
        <begin position="194"/>
        <end position="217"/>
    </location>
</feature>
<feature type="transmembrane region" description="Helical" evidence="1">
    <location>
        <begin position="218"/>
        <end position="238"/>
    </location>
</feature>
<feature type="topological domain" description="Cytoplasmic" evidence="6">
    <location>
        <begin position="239"/>
        <end position="251"/>
    </location>
</feature>
<feature type="transmembrane region" description="Helical" evidence="1">
    <location>
        <begin position="252"/>
        <end position="274"/>
    </location>
</feature>
<feature type="topological domain" description="Extracellular" evidence="6">
    <location>
        <begin position="275"/>
        <end position="302"/>
    </location>
</feature>
<feature type="transmembrane region" description="Helical" evidence="1">
    <location>
        <begin position="303"/>
        <end position="325"/>
    </location>
</feature>
<feature type="topological domain" description="Cytoplasmic" evidence="6">
    <location>
        <begin position="326"/>
        <end position="351"/>
    </location>
</feature>
<feature type="transmembrane region" description="Helical" evidence="1">
    <location>
        <begin position="352"/>
        <end position="370"/>
    </location>
</feature>
<feature type="transmembrane region" description="Helical" evidence="1">
    <location>
        <begin position="371"/>
        <end position="391"/>
    </location>
</feature>
<feature type="topological domain" description="Cytoplasmic" evidence="6">
    <location>
        <begin position="392"/>
        <end position="410"/>
    </location>
</feature>
<feature type="transmembrane region" description="Helical" evidence="1">
    <location>
        <begin position="411"/>
        <end position="431"/>
    </location>
</feature>
<feature type="topological domain" description="Extracellular" evidence="6">
    <location>
        <begin position="432"/>
        <end position="434"/>
    </location>
</feature>
<feature type="transmembrane region" description="Helical" evidence="1">
    <location>
        <begin position="435"/>
        <end position="450"/>
    </location>
</feature>
<feature type="topological domain" description="Cytoplasmic" evidence="6">
    <location>
        <begin position="451"/>
        <end position="487"/>
    </location>
</feature>
<feature type="region of interest" description="Disordered" evidence="4">
    <location>
        <begin position="1"/>
        <end position="22"/>
    </location>
</feature>
<feature type="binding site" evidence="1">
    <location>
        <begin position="43"/>
        <end position="47"/>
    </location>
    <ligand>
        <name>L-arginine</name>
        <dbReference type="ChEBI" id="CHEBI:32682"/>
        <note>substrate</note>
    </ligand>
</feature>
<feature type="binding site" evidence="1">
    <location>
        <position position="233"/>
    </location>
    <ligand>
        <name>L-arginine</name>
        <dbReference type="ChEBI" id="CHEBI:32682"/>
        <note>substrate</note>
    </ligand>
</feature>
<feature type="modified residue" description="Phosphoserine" evidence="2">
    <location>
        <position position="18"/>
    </location>
</feature>
<gene>
    <name evidence="1" type="primary">SLC7A9</name>
    <name evidence="1" type="synonym">BAT1</name>
</gene>
<organism>
    <name type="scientific">Oryctolagus cuniculus</name>
    <name type="common">Rabbit</name>
    <dbReference type="NCBI Taxonomy" id="9986"/>
    <lineage>
        <taxon>Eukaryota</taxon>
        <taxon>Metazoa</taxon>
        <taxon>Chordata</taxon>
        <taxon>Craniata</taxon>
        <taxon>Vertebrata</taxon>
        <taxon>Euteleostomi</taxon>
        <taxon>Mammalia</taxon>
        <taxon>Eutheria</taxon>
        <taxon>Euarchontoglires</taxon>
        <taxon>Glires</taxon>
        <taxon>Lagomorpha</taxon>
        <taxon>Leporidae</taxon>
        <taxon>Oryctolagus</taxon>
    </lineage>
</organism>